<feature type="chain" id="PRO_0000056908" description="Anthranilate synthase, phenazine specific">
    <location>
        <begin position="1"/>
        <end position="637"/>
    </location>
</feature>
<feature type="domain" description="Glutamine amidotransferase type-1" evidence="1">
    <location>
        <begin position="437"/>
        <end position="628"/>
    </location>
</feature>
<feature type="region of interest" description="Anthranilate synthase component I">
    <location>
        <begin position="1"/>
        <end position="434"/>
    </location>
</feature>
<feature type="active site" description="For GATase activity" evidence="1">
    <location>
        <position position="517"/>
    </location>
</feature>
<feature type="active site" description="For GATase activity" evidence="1">
    <location>
        <position position="602"/>
    </location>
</feature>
<feature type="active site" description="For GATase activity" evidence="1">
    <location>
        <position position="604"/>
    </location>
</feature>
<comment type="function">
    <text>Involved in the biosynthesis of the antibiotic, phenazine, a nitrogen-containing heterocyclic molecule having important roles in virulence, competition and biological control.</text>
</comment>
<comment type="catalytic activity">
    <reaction>
        <text>chorismate + L-glutamine = anthranilate + pyruvate + L-glutamate + H(+)</text>
        <dbReference type="Rhea" id="RHEA:21732"/>
        <dbReference type="ChEBI" id="CHEBI:15361"/>
        <dbReference type="ChEBI" id="CHEBI:15378"/>
        <dbReference type="ChEBI" id="CHEBI:16567"/>
        <dbReference type="ChEBI" id="CHEBI:29748"/>
        <dbReference type="ChEBI" id="CHEBI:29985"/>
        <dbReference type="ChEBI" id="CHEBI:58359"/>
        <dbReference type="EC" id="4.1.3.27"/>
    </reaction>
</comment>
<comment type="pathway">
    <text>Antibiotic biosynthesis; phenazine biosynthesis.</text>
</comment>
<comment type="miscellaneous">
    <text>Component I catalyzes the formation of anthranilate using ammonia rather than glutamine, whereas component II provides glutamine amidotransferase activity.</text>
</comment>
<keyword id="KW-0045">Antibiotic biosynthesis</keyword>
<keyword id="KW-0315">Glutamine amidotransferase</keyword>
<keyword id="KW-0456">Lyase</keyword>
<keyword id="KW-0808">Transferase</keyword>
<keyword id="KW-0843">Virulence</keyword>
<proteinExistence type="predicted"/>
<name>PHZE_PSEFL</name>
<reference key="1">
    <citation type="journal article" date="1998" name="J. Bacteriol.">
        <title>A seven-gene locus for synthesis of phenazine-1-carboxylic acid by Pseudomonas fluorescens 2-79.</title>
        <authorList>
            <person name="Mavrodi D.V."/>
            <person name="Ksenzenko V.N."/>
            <person name="Bonsall R.F."/>
            <person name="Cook R.J."/>
            <person name="Boronin A.M."/>
            <person name="Thomashow L.S."/>
        </authorList>
    </citation>
    <scope>NUCLEOTIDE SEQUENCE [GENOMIC DNA]</scope>
    <source>
        <strain>NRRL B-15132 / 2-79</strain>
    </source>
</reference>
<organism>
    <name type="scientific">Pseudomonas fluorescens</name>
    <dbReference type="NCBI Taxonomy" id="294"/>
    <lineage>
        <taxon>Bacteria</taxon>
        <taxon>Pseudomonadati</taxon>
        <taxon>Pseudomonadota</taxon>
        <taxon>Gammaproteobacteria</taxon>
        <taxon>Pseudomonadales</taxon>
        <taxon>Pseudomonadaceae</taxon>
        <taxon>Pseudomonas</taxon>
    </lineage>
</organism>
<accession>Q51791</accession>
<protein>
    <recommendedName>
        <fullName>Anthranilate synthase, phenazine specific</fullName>
        <ecNumber>4.1.3.27</ecNumber>
    </recommendedName>
    <domain>
        <recommendedName>
            <fullName>Glutamine amidotransferase</fullName>
        </recommendedName>
    </domain>
</protein>
<evidence type="ECO:0000255" key="1">
    <source>
        <dbReference type="PROSITE-ProRule" id="PRU00605"/>
    </source>
</evidence>
<gene>
    <name type="primary">phzE</name>
</gene>
<sequence>MSQAAARLMERILQPVPEPFALLYRPESSGPGLLNVLIGEMSQPQVLADIDLPAPSIGAPRLDVLTLIPYCQIAERGFAAVDDQSPLLAMNITEQQTISIEQMLALLPNVPIQLNNERFDLSDASYAEIVSQVIANEIGSGEGANFVIKRTFLAEISEYQPASALSFFRHLLEREKGVYWTFIIHTGSRTFVGASPERHISVKDGLAVMNPISGTYRYPPAGPSLTEVMDFLADRKEADELYMVVDEELKMMARICEDGGHVLGPYLKEMTHLAHTEYFIEGRTRRDVREILHETLFAPTVTGSPLESACRVIERYEPQGRAYYSGMAALIGSDGKGGRSLDSAILIRTADIDNCGQVRISVGSTIVRHSEPLTEAAESRAKAAGLIAALKNQAASRFGDHLQVRAALASRNAYVSDFWLMNSQQRQQTQSDFSGRQVLIVDAEDTFTSMIAKQLRALGLVVTVRSFSDEYSFDGYDLVIMGPGPGNPSDVQLPKIDHLHVAIRSLLNQQRPFLAVCLSHQVLSLCLGLELQRKAIPNQGVQKQIDLFGNAERVGFYNTFAARSSSDRLDIDGIGTVEISRDSETGEVHALRGPAFASMQFHAESLLTQEGPRIIADLLRHALIHTPVDSSVSAAGR</sequence>
<dbReference type="EC" id="4.1.3.27"/>
<dbReference type="EMBL" id="L48616">
    <property type="protein sequence ID" value="AAC18904.1"/>
    <property type="molecule type" value="Genomic_DNA"/>
</dbReference>
<dbReference type="RefSeq" id="WP_043050174.1">
    <property type="nucleotide sequence ID" value="NZ_JXCQ01000041.1"/>
</dbReference>
<dbReference type="SMR" id="Q51791"/>
<dbReference type="KEGG" id="ag:AAC18904"/>
<dbReference type="BioCyc" id="MetaCyc:MONOMER-13690"/>
<dbReference type="UniPathway" id="UPA00099"/>
<dbReference type="GO" id="GO:0004049">
    <property type="term" value="F:anthranilate synthase activity"/>
    <property type="evidence" value="ECO:0007669"/>
    <property type="project" value="UniProtKB-EC"/>
</dbReference>
<dbReference type="GO" id="GO:0016740">
    <property type="term" value="F:transferase activity"/>
    <property type="evidence" value="ECO:0007669"/>
    <property type="project" value="UniProtKB-KW"/>
</dbReference>
<dbReference type="GO" id="GO:0000162">
    <property type="term" value="P:L-tryptophan biosynthetic process"/>
    <property type="evidence" value="ECO:0007669"/>
    <property type="project" value="TreeGrafter"/>
</dbReference>
<dbReference type="GO" id="GO:0002047">
    <property type="term" value="P:phenazine biosynthetic process"/>
    <property type="evidence" value="ECO:0007669"/>
    <property type="project" value="UniProtKB-UniPathway"/>
</dbReference>
<dbReference type="CDD" id="cd01743">
    <property type="entry name" value="GATase1_Anthranilate_Synthase"/>
    <property type="match status" value="1"/>
</dbReference>
<dbReference type="Gene3D" id="3.40.50.880">
    <property type="match status" value="1"/>
</dbReference>
<dbReference type="Gene3D" id="3.60.120.10">
    <property type="entry name" value="Anthranilate synthase"/>
    <property type="match status" value="1"/>
</dbReference>
<dbReference type="InterPro" id="IPR005801">
    <property type="entry name" value="ADC_synthase"/>
</dbReference>
<dbReference type="InterPro" id="IPR019999">
    <property type="entry name" value="Anth_synth_I-like"/>
</dbReference>
<dbReference type="InterPro" id="IPR015890">
    <property type="entry name" value="Chorismate_C"/>
</dbReference>
<dbReference type="InterPro" id="IPR029062">
    <property type="entry name" value="Class_I_gatase-like"/>
</dbReference>
<dbReference type="InterPro" id="IPR017926">
    <property type="entry name" value="GATASE"/>
</dbReference>
<dbReference type="InterPro" id="IPR006221">
    <property type="entry name" value="TrpG/PapA_dom"/>
</dbReference>
<dbReference type="PANTHER" id="PTHR11236">
    <property type="entry name" value="AMINOBENZOATE/ANTHRANILATE SYNTHASE"/>
    <property type="match status" value="1"/>
</dbReference>
<dbReference type="PANTHER" id="PTHR11236:SF49">
    <property type="entry name" value="ANTHRANILATE SYNTHASE COMPONENT 1"/>
    <property type="match status" value="1"/>
</dbReference>
<dbReference type="Pfam" id="PF00425">
    <property type="entry name" value="Chorismate_bind"/>
    <property type="match status" value="1"/>
</dbReference>
<dbReference type="Pfam" id="PF00117">
    <property type="entry name" value="GATase"/>
    <property type="match status" value="1"/>
</dbReference>
<dbReference type="PRINTS" id="PR00097">
    <property type="entry name" value="ANTSNTHASEII"/>
</dbReference>
<dbReference type="PRINTS" id="PR00099">
    <property type="entry name" value="CPSGATASE"/>
</dbReference>
<dbReference type="PRINTS" id="PR00096">
    <property type="entry name" value="GATASE"/>
</dbReference>
<dbReference type="SUPFAM" id="SSF56322">
    <property type="entry name" value="ADC synthase"/>
    <property type="match status" value="1"/>
</dbReference>
<dbReference type="SUPFAM" id="SSF52317">
    <property type="entry name" value="Class I glutamine amidotransferase-like"/>
    <property type="match status" value="1"/>
</dbReference>
<dbReference type="PROSITE" id="PS51273">
    <property type="entry name" value="GATASE_TYPE_1"/>
    <property type="match status" value="1"/>
</dbReference>